<name>MKROS_HUMAN</name>
<dbReference type="EMBL" id="AC018500">
    <property type="status" value="NOT_ANNOTATED_CDS"/>
    <property type="molecule type" value="Genomic_DNA"/>
</dbReference>
<dbReference type="CCDS" id="CCDS58816.1"/>
<dbReference type="RefSeq" id="NP_001182208.1">
    <property type="nucleotide sequence ID" value="NM_001195279.2"/>
</dbReference>
<dbReference type="BioGRID" id="934106">
    <property type="interactions" value="1"/>
</dbReference>
<dbReference type="FunCoup" id="H3BPM6">
    <property type="interactions" value="11"/>
</dbReference>
<dbReference type="STRING" id="9606.ENSP00000455385"/>
<dbReference type="iPTMnet" id="H3BPM6"/>
<dbReference type="PhosphoSitePlus" id="H3BPM6"/>
<dbReference type="BioMuta" id="MKRN2OS"/>
<dbReference type="MassIVE" id="H3BPM6"/>
<dbReference type="PaxDb" id="9606-ENSP00000455385"/>
<dbReference type="PeptideAtlas" id="H3BPM6"/>
<dbReference type="ProteomicsDB" id="41538"/>
<dbReference type="Antibodypedia" id="77123">
    <property type="antibodies" value="9 antibodies from 5 providers"/>
</dbReference>
<dbReference type="DNASU" id="100129480"/>
<dbReference type="Ensembl" id="ENST00000564146.4">
    <property type="protein sequence ID" value="ENSP00000455385.3"/>
    <property type="gene ID" value="ENSG00000225526.6"/>
</dbReference>
<dbReference type="GeneID" id="100129480"/>
<dbReference type="KEGG" id="hsa:100129480"/>
<dbReference type="MANE-Select" id="ENST00000564146.4">
    <property type="protein sequence ID" value="ENSP00000455385.3"/>
    <property type="RefSeq nucleotide sequence ID" value="NM_001195279.2"/>
    <property type="RefSeq protein sequence ID" value="NP_001182208.1"/>
</dbReference>
<dbReference type="UCSC" id="uc021wtc.2">
    <property type="organism name" value="human"/>
</dbReference>
<dbReference type="AGR" id="HGNC:40375"/>
<dbReference type="CTD" id="100129480"/>
<dbReference type="DisGeNET" id="100129480"/>
<dbReference type="GeneCards" id="MKRN2OS"/>
<dbReference type="HGNC" id="HGNC:40375">
    <property type="gene designation" value="MKRN2OS"/>
</dbReference>
<dbReference type="HPA" id="ENSG00000225526">
    <property type="expression patterns" value="Tissue enhanced (epididymis, intestine)"/>
</dbReference>
<dbReference type="neXtProt" id="NX_H3BPM6"/>
<dbReference type="OpenTargets" id="ENSG00000225526"/>
<dbReference type="VEuPathDB" id="HostDB:ENSG00000225526"/>
<dbReference type="eggNOG" id="ENOG502R8ZC">
    <property type="taxonomic scope" value="Eukaryota"/>
</dbReference>
<dbReference type="GeneTree" id="ENSGT00390000003839"/>
<dbReference type="HOGENOM" id="CLU_084023_0_0_1"/>
<dbReference type="InParanoid" id="H3BPM6"/>
<dbReference type="OMA" id="PNMYGMM"/>
<dbReference type="OrthoDB" id="10065749at2759"/>
<dbReference type="PAN-GO" id="H3BPM6">
    <property type="GO annotations" value="0 GO annotations based on evolutionary models"/>
</dbReference>
<dbReference type="PhylomeDB" id="H3BPM6"/>
<dbReference type="TreeFam" id="TF323599"/>
<dbReference type="PathwayCommons" id="H3BPM6"/>
<dbReference type="SignaLink" id="H3BPM6"/>
<dbReference type="BioGRID-ORCS" id="100129480">
    <property type="hits" value="15 hits in 1096 CRISPR screens"/>
</dbReference>
<dbReference type="Pharos" id="H3BPM6">
    <property type="development level" value="Tdark"/>
</dbReference>
<dbReference type="PRO" id="PR:H3BPM6"/>
<dbReference type="Proteomes" id="UP000005640">
    <property type="component" value="Chromosome 3"/>
</dbReference>
<dbReference type="RNAct" id="H3BPM6">
    <property type="molecule type" value="protein"/>
</dbReference>
<dbReference type="Bgee" id="ENSG00000225526">
    <property type="expression patterns" value="Expressed in cerebellum and 99 other cell types or tissues"/>
</dbReference>
<dbReference type="ExpressionAtlas" id="H3BPM6">
    <property type="expression patterns" value="baseline and differential"/>
</dbReference>
<dbReference type="InterPro" id="IPR032016">
    <property type="entry name" value="MKRN2OS-like"/>
</dbReference>
<dbReference type="InterPro" id="IPR053921">
    <property type="entry name" value="MKRN2OS-like_C"/>
</dbReference>
<dbReference type="InterPro" id="IPR053922">
    <property type="entry name" value="MKRN2OS-like_N"/>
</dbReference>
<dbReference type="PANTHER" id="PTHR33963">
    <property type="entry name" value="MKRN2 OPPOSITE STRAND PROTEIN"/>
    <property type="match status" value="1"/>
</dbReference>
<dbReference type="PANTHER" id="PTHR33963:SF2">
    <property type="entry name" value="MKRN2 OPPOSITE STRAND PROTEIN"/>
    <property type="match status" value="1"/>
</dbReference>
<dbReference type="Pfam" id="PF16044">
    <property type="entry name" value="DUF4796_C"/>
    <property type="match status" value="1"/>
</dbReference>
<dbReference type="Pfam" id="PF22795">
    <property type="entry name" value="DUF4796_N"/>
    <property type="match status" value="1"/>
</dbReference>
<proteinExistence type="evidence at protein level"/>
<feature type="chain" id="PRO_0000421254" description="MKRN2 opposite strand protein">
    <location>
        <begin position="1"/>
        <end position="223"/>
    </location>
</feature>
<organism>
    <name type="scientific">Homo sapiens</name>
    <name type="common">Human</name>
    <dbReference type="NCBI Taxonomy" id="9606"/>
    <lineage>
        <taxon>Eukaryota</taxon>
        <taxon>Metazoa</taxon>
        <taxon>Chordata</taxon>
        <taxon>Craniata</taxon>
        <taxon>Vertebrata</taxon>
        <taxon>Euteleostomi</taxon>
        <taxon>Mammalia</taxon>
        <taxon>Eutheria</taxon>
        <taxon>Euarchontoglires</taxon>
        <taxon>Primates</taxon>
        <taxon>Haplorrhini</taxon>
        <taxon>Catarrhini</taxon>
        <taxon>Hominidae</taxon>
        <taxon>Homo</taxon>
    </lineage>
</organism>
<reference key="1">
    <citation type="journal article" date="2006" name="Nature">
        <title>The DNA sequence, annotation and analysis of human chromosome 3.</title>
        <authorList>
            <person name="Muzny D.M."/>
            <person name="Scherer S.E."/>
            <person name="Kaul R."/>
            <person name="Wang J."/>
            <person name="Yu J."/>
            <person name="Sudbrak R."/>
            <person name="Buhay C.J."/>
            <person name="Chen R."/>
            <person name="Cree A."/>
            <person name="Ding Y."/>
            <person name="Dugan-Rocha S."/>
            <person name="Gill R."/>
            <person name="Gunaratne P."/>
            <person name="Harris R.A."/>
            <person name="Hawes A.C."/>
            <person name="Hernandez J."/>
            <person name="Hodgson A.V."/>
            <person name="Hume J."/>
            <person name="Jackson A."/>
            <person name="Khan Z.M."/>
            <person name="Kovar-Smith C."/>
            <person name="Lewis L.R."/>
            <person name="Lozado R.J."/>
            <person name="Metzker M.L."/>
            <person name="Milosavljevic A."/>
            <person name="Miner G.R."/>
            <person name="Morgan M.B."/>
            <person name="Nazareth L.V."/>
            <person name="Scott G."/>
            <person name="Sodergren E."/>
            <person name="Song X.-Z."/>
            <person name="Steffen D."/>
            <person name="Wei S."/>
            <person name="Wheeler D.A."/>
            <person name="Wright M.W."/>
            <person name="Worley K.C."/>
            <person name="Yuan Y."/>
            <person name="Zhang Z."/>
            <person name="Adams C.Q."/>
            <person name="Ansari-Lari M.A."/>
            <person name="Ayele M."/>
            <person name="Brown M.J."/>
            <person name="Chen G."/>
            <person name="Chen Z."/>
            <person name="Clendenning J."/>
            <person name="Clerc-Blankenburg K.P."/>
            <person name="Chen R."/>
            <person name="Chen Z."/>
            <person name="Davis C."/>
            <person name="Delgado O."/>
            <person name="Dinh H.H."/>
            <person name="Dong W."/>
            <person name="Draper H."/>
            <person name="Ernst S."/>
            <person name="Fu G."/>
            <person name="Gonzalez-Garay M.L."/>
            <person name="Garcia D.K."/>
            <person name="Gillett W."/>
            <person name="Gu J."/>
            <person name="Hao B."/>
            <person name="Haugen E."/>
            <person name="Havlak P."/>
            <person name="He X."/>
            <person name="Hennig S."/>
            <person name="Hu S."/>
            <person name="Huang W."/>
            <person name="Jackson L.R."/>
            <person name="Jacob L.S."/>
            <person name="Kelly S.H."/>
            <person name="Kube M."/>
            <person name="Levy R."/>
            <person name="Li Z."/>
            <person name="Liu B."/>
            <person name="Liu J."/>
            <person name="Liu W."/>
            <person name="Lu J."/>
            <person name="Maheshwari M."/>
            <person name="Nguyen B.-V."/>
            <person name="Okwuonu G.O."/>
            <person name="Palmeiri A."/>
            <person name="Pasternak S."/>
            <person name="Perez L.M."/>
            <person name="Phelps K.A."/>
            <person name="Plopper F.J."/>
            <person name="Qiang B."/>
            <person name="Raymond C."/>
            <person name="Rodriguez R."/>
            <person name="Saenphimmachak C."/>
            <person name="Santibanez J."/>
            <person name="Shen H."/>
            <person name="Shen Y."/>
            <person name="Subramanian S."/>
            <person name="Tabor P.E."/>
            <person name="Verduzco D."/>
            <person name="Waldron L."/>
            <person name="Wang J."/>
            <person name="Wang J."/>
            <person name="Wang Q."/>
            <person name="Williams G.A."/>
            <person name="Wong G.K.-S."/>
            <person name="Yao Z."/>
            <person name="Zhang J."/>
            <person name="Zhang X."/>
            <person name="Zhao G."/>
            <person name="Zhou J."/>
            <person name="Zhou Y."/>
            <person name="Nelson D."/>
            <person name="Lehrach H."/>
            <person name="Reinhardt R."/>
            <person name="Naylor S.L."/>
            <person name="Yang H."/>
            <person name="Olson M."/>
            <person name="Weinstock G."/>
            <person name="Gibbs R.A."/>
        </authorList>
    </citation>
    <scope>NUCLEOTIDE SEQUENCE [LARGE SCALE GENOMIC DNA]</scope>
</reference>
<sequence length="223" mass="25451">MHCAEAGKALIKFNHCEKYIYSFSVPQCCPLCQQDLGSRKLEDAPVSIANPFTNGHQEKCSFLLRPTQGTFLREYDGRSDLHVGITNTNGVVYNYSAHGVQRDGEGWEESISIPLLQPNMYGMMEQWDKYLEDFSTSGAWLPHRYEDNHHNCYSYALTFINCVLMAEGRQQLDKGEFTEKYVVPRTRLASKFITLYRAIREHGFYVTDCPQQQAQPPEGGGLC</sequence>
<keyword id="KW-1267">Proteomics identification</keyword>
<keyword id="KW-1185">Reference proteome</keyword>
<accession>H3BPM6</accession>
<protein>
    <recommendedName>
        <fullName>MKRN2 opposite strand protein</fullName>
    </recommendedName>
    <alternativeName>
        <fullName>MKRN2 antisense RNA 1</fullName>
    </alternativeName>
    <alternativeName>
        <fullName>MKRN2 antisense gene protein 1</fullName>
    </alternativeName>
</protein>
<gene>
    <name type="primary">MKRN2OS</name>
    <name type="synonym">C3orf83</name>
    <name type="synonym">MKRN2-AS1</name>
</gene>